<proteinExistence type="inferred from homology"/>
<dbReference type="EC" id="4.1.99.17" evidence="1"/>
<dbReference type="EMBL" id="FM200053">
    <property type="protein sequence ID" value="CAR61999.1"/>
    <property type="molecule type" value="Genomic_DNA"/>
</dbReference>
<dbReference type="RefSeq" id="WP_000108407.1">
    <property type="nucleotide sequence ID" value="NC_011147.1"/>
</dbReference>
<dbReference type="SMR" id="B5BJR3"/>
<dbReference type="KEGG" id="sek:SSPA3716"/>
<dbReference type="HOGENOM" id="CLU_013181_2_1_6"/>
<dbReference type="UniPathway" id="UPA00060"/>
<dbReference type="Proteomes" id="UP000001869">
    <property type="component" value="Chromosome"/>
</dbReference>
<dbReference type="GO" id="GO:0005829">
    <property type="term" value="C:cytosol"/>
    <property type="evidence" value="ECO:0007669"/>
    <property type="project" value="TreeGrafter"/>
</dbReference>
<dbReference type="GO" id="GO:0051539">
    <property type="term" value="F:4 iron, 4 sulfur cluster binding"/>
    <property type="evidence" value="ECO:0007669"/>
    <property type="project" value="UniProtKB-KW"/>
</dbReference>
<dbReference type="GO" id="GO:0016830">
    <property type="term" value="F:carbon-carbon lyase activity"/>
    <property type="evidence" value="ECO:0007669"/>
    <property type="project" value="InterPro"/>
</dbReference>
<dbReference type="GO" id="GO:0008270">
    <property type="term" value="F:zinc ion binding"/>
    <property type="evidence" value="ECO:0007669"/>
    <property type="project" value="UniProtKB-UniRule"/>
</dbReference>
<dbReference type="GO" id="GO:0009228">
    <property type="term" value="P:thiamine biosynthetic process"/>
    <property type="evidence" value="ECO:0007669"/>
    <property type="project" value="UniProtKB-KW"/>
</dbReference>
<dbReference type="GO" id="GO:0009229">
    <property type="term" value="P:thiamine diphosphate biosynthetic process"/>
    <property type="evidence" value="ECO:0007669"/>
    <property type="project" value="UniProtKB-UniRule"/>
</dbReference>
<dbReference type="FunFam" id="3.20.20.540:FF:000001">
    <property type="entry name" value="Phosphomethylpyrimidine synthase"/>
    <property type="match status" value="1"/>
</dbReference>
<dbReference type="Gene3D" id="6.10.250.620">
    <property type="match status" value="1"/>
</dbReference>
<dbReference type="Gene3D" id="3.20.20.540">
    <property type="entry name" value="Radical SAM ThiC family, central domain"/>
    <property type="match status" value="1"/>
</dbReference>
<dbReference type="HAMAP" id="MF_00089">
    <property type="entry name" value="ThiC"/>
    <property type="match status" value="1"/>
</dbReference>
<dbReference type="InterPro" id="IPR037509">
    <property type="entry name" value="ThiC"/>
</dbReference>
<dbReference type="InterPro" id="IPR025747">
    <property type="entry name" value="ThiC-associated_dom"/>
</dbReference>
<dbReference type="InterPro" id="IPR038521">
    <property type="entry name" value="ThiC/Bza_core_dom"/>
</dbReference>
<dbReference type="InterPro" id="IPR002817">
    <property type="entry name" value="ThiC/BzaA/B"/>
</dbReference>
<dbReference type="NCBIfam" id="NF006763">
    <property type="entry name" value="PRK09284.1"/>
    <property type="match status" value="1"/>
</dbReference>
<dbReference type="NCBIfam" id="NF009895">
    <property type="entry name" value="PRK13352.1"/>
    <property type="match status" value="1"/>
</dbReference>
<dbReference type="NCBIfam" id="TIGR00190">
    <property type="entry name" value="thiC"/>
    <property type="match status" value="1"/>
</dbReference>
<dbReference type="PANTHER" id="PTHR30557:SF1">
    <property type="entry name" value="PHOSPHOMETHYLPYRIMIDINE SYNTHASE, CHLOROPLASTIC"/>
    <property type="match status" value="1"/>
</dbReference>
<dbReference type="PANTHER" id="PTHR30557">
    <property type="entry name" value="THIAMINE BIOSYNTHESIS PROTEIN THIC"/>
    <property type="match status" value="1"/>
</dbReference>
<dbReference type="Pfam" id="PF13667">
    <property type="entry name" value="ThiC-associated"/>
    <property type="match status" value="1"/>
</dbReference>
<dbReference type="Pfam" id="PF01964">
    <property type="entry name" value="ThiC_Rad_SAM"/>
    <property type="match status" value="1"/>
</dbReference>
<dbReference type="SFLD" id="SFLDF00407">
    <property type="entry name" value="phosphomethylpyrimidine_syntha"/>
    <property type="match status" value="1"/>
</dbReference>
<dbReference type="SFLD" id="SFLDG01114">
    <property type="entry name" value="phosphomethylpyrimidine_syntha"/>
    <property type="match status" value="1"/>
</dbReference>
<dbReference type="SFLD" id="SFLDS00113">
    <property type="entry name" value="Radical_SAM_Phosphomethylpyrim"/>
    <property type="match status" value="1"/>
</dbReference>
<feature type="chain" id="PRO_1000093233" description="Phosphomethylpyrimidine synthase">
    <location>
        <begin position="1"/>
        <end position="631"/>
    </location>
</feature>
<feature type="binding site" evidence="1">
    <location>
        <position position="239"/>
    </location>
    <ligand>
        <name>substrate</name>
    </ligand>
</feature>
<feature type="binding site" evidence="1">
    <location>
        <position position="268"/>
    </location>
    <ligand>
        <name>substrate</name>
    </ligand>
</feature>
<feature type="binding site" evidence="1">
    <location>
        <position position="297"/>
    </location>
    <ligand>
        <name>substrate</name>
    </ligand>
</feature>
<feature type="binding site" evidence="1">
    <location>
        <position position="333"/>
    </location>
    <ligand>
        <name>substrate</name>
    </ligand>
</feature>
<feature type="binding site" evidence="1">
    <location>
        <begin position="353"/>
        <end position="355"/>
    </location>
    <ligand>
        <name>substrate</name>
    </ligand>
</feature>
<feature type="binding site" evidence="1">
    <location>
        <begin position="394"/>
        <end position="397"/>
    </location>
    <ligand>
        <name>substrate</name>
    </ligand>
</feature>
<feature type="binding site" evidence="1">
    <location>
        <position position="433"/>
    </location>
    <ligand>
        <name>substrate</name>
    </ligand>
</feature>
<feature type="binding site" evidence="1">
    <location>
        <position position="437"/>
    </location>
    <ligand>
        <name>Zn(2+)</name>
        <dbReference type="ChEBI" id="CHEBI:29105"/>
    </ligand>
</feature>
<feature type="binding site" evidence="1">
    <location>
        <position position="460"/>
    </location>
    <ligand>
        <name>substrate</name>
    </ligand>
</feature>
<feature type="binding site" evidence="1">
    <location>
        <position position="501"/>
    </location>
    <ligand>
        <name>Zn(2+)</name>
        <dbReference type="ChEBI" id="CHEBI:29105"/>
    </ligand>
</feature>
<feature type="binding site" evidence="1">
    <location>
        <position position="581"/>
    </location>
    <ligand>
        <name>[4Fe-4S] cluster</name>
        <dbReference type="ChEBI" id="CHEBI:49883"/>
        <note>4Fe-4S-S-AdoMet</note>
    </ligand>
</feature>
<feature type="binding site" evidence="1">
    <location>
        <position position="584"/>
    </location>
    <ligand>
        <name>[4Fe-4S] cluster</name>
        <dbReference type="ChEBI" id="CHEBI:49883"/>
        <note>4Fe-4S-S-AdoMet</note>
    </ligand>
</feature>
<feature type="binding site" evidence="1">
    <location>
        <position position="589"/>
    </location>
    <ligand>
        <name>[4Fe-4S] cluster</name>
        <dbReference type="ChEBI" id="CHEBI:49883"/>
        <note>4Fe-4S-S-AdoMet</note>
    </ligand>
</feature>
<sequence length="631" mass="70812">MSTTTLTRREQRAKAQHFIDTLEGTAFPNSKRIYVTGSQHDIRVPMREIQLSPTLIGGSKDNPQFEENEAVPVYDTSGPYGDPEVAINVQQGLAKLRQPWIDARNDSEELDDRSSAYTRERLADDGLDDLRFTGLLTPKRAKAGHRVTQLHYARQGIVTPEMEFIAIRENMGRERIRSEVLRHQHPGMNFGARLPENITPEFVRDEVAAGRAIIPANINHPESEPMIIGRNFLVKVNANIGNSAVTSSIEEEVEKLVWSTRWGADTVMDLSTGRYIHETREWILRNSPVPIGTVPIYQALEKVNGIAEDLTWEAFRDTLLEQAEQGVDYFTIHAGVLLRYVPMTAKRLTGIVSRGGSIMAKWCLSHHKENFLFEHFREICEICAAYDVSLSLGDGLRPGSIQDANDEAQFSELHTLGELTKIAWEYDVQVMIEGPGHVPMHMIQRNMTEELESCHEAPFYTLGPLTTDIAPGYDHFTSGIGAAMIGWFGCAMLCYVTPKEHLGLPNKEDVKQGLITYKIAAHAADLAKGHPGAQIRDNAMSKARFEFRWEDQFNLALDPFTARAYHDETLPQESGKVAHFCSMCGPKFCSMKISQEVRDYAAAQTIEVGMADMSESFRAKGGEIYLKREEA</sequence>
<accession>B5BJR3</accession>
<gene>
    <name evidence="1" type="primary">thiC</name>
    <name type="ordered locus">SSPA3716</name>
</gene>
<name>THIC_SALPK</name>
<keyword id="KW-0004">4Fe-4S</keyword>
<keyword id="KW-0408">Iron</keyword>
<keyword id="KW-0411">Iron-sulfur</keyword>
<keyword id="KW-0456">Lyase</keyword>
<keyword id="KW-0479">Metal-binding</keyword>
<keyword id="KW-0949">S-adenosyl-L-methionine</keyword>
<keyword id="KW-0784">Thiamine biosynthesis</keyword>
<keyword id="KW-0862">Zinc</keyword>
<evidence type="ECO:0000255" key="1">
    <source>
        <dbReference type="HAMAP-Rule" id="MF_00089"/>
    </source>
</evidence>
<reference key="1">
    <citation type="journal article" date="2009" name="BMC Genomics">
        <title>Pseudogene accumulation in the evolutionary histories of Salmonella enterica serovars Paratyphi A and Typhi.</title>
        <authorList>
            <person name="Holt K.E."/>
            <person name="Thomson N.R."/>
            <person name="Wain J."/>
            <person name="Langridge G.C."/>
            <person name="Hasan R."/>
            <person name="Bhutta Z.A."/>
            <person name="Quail M.A."/>
            <person name="Norbertczak H."/>
            <person name="Walker D."/>
            <person name="Simmonds M."/>
            <person name="White B."/>
            <person name="Bason N."/>
            <person name="Mungall K."/>
            <person name="Dougan G."/>
            <person name="Parkhill J."/>
        </authorList>
    </citation>
    <scope>NUCLEOTIDE SEQUENCE [LARGE SCALE GENOMIC DNA]</scope>
    <source>
        <strain>AKU_12601</strain>
    </source>
</reference>
<organism>
    <name type="scientific">Salmonella paratyphi A (strain AKU_12601)</name>
    <dbReference type="NCBI Taxonomy" id="554290"/>
    <lineage>
        <taxon>Bacteria</taxon>
        <taxon>Pseudomonadati</taxon>
        <taxon>Pseudomonadota</taxon>
        <taxon>Gammaproteobacteria</taxon>
        <taxon>Enterobacterales</taxon>
        <taxon>Enterobacteriaceae</taxon>
        <taxon>Salmonella</taxon>
    </lineage>
</organism>
<protein>
    <recommendedName>
        <fullName evidence="1">Phosphomethylpyrimidine synthase</fullName>
        <ecNumber evidence="1">4.1.99.17</ecNumber>
    </recommendedName>
    <alternativeName>
        <fullName evidence="1">Hydroxymethylpyrimidine phosphate synthase</fullName>
        <shortName evidence="1">HMP-P synthase</shortName>
        <shortName evidence="1">HMP-phosphate synthase</shortName>
        <shortName evidence="1">HMPP synthase</shortName>
    </alternativeName>
    <alternativeName>
        <fullName evidence="1">Thiamine biosynthesis protein ThiC</fullName>
    </alternativeName>
</protein>
<comment type="function">
    <text evidence="1">Catalyzes the synthesis of the hydroxymethylpyrimidine phosphate (HMP-P) moiety of thiamine from aminoimidazole ribotide (AIR) in a radical S-adenosyl-L-methionine (SAM)-dependent reaction.</text>
</comment>
<comment type="catalytic activity">
    <reaction evidence="1">
        <text>5-amino-1-(5-phospho-beta-D-ribosyl)imidazole + S-adenosyl-L-methionine = 4-amino-2-methyl-5-(phosphooxymethyl)pyrimidine + CO + 5'-deoxyadenosine + formate + L-methionine + 3 H(+)</text>
        <dbReference type="Rhea" id="RHEA:24840"/>
        <dbReference type="ChEBI" id="CHEBI:15378"/>
        <dbReference type="ChEBI" id="CHEBI:15740"/>
        <dbReference type="ChEBI" id="CHEBI:17245"/>
        <dbReference type="ChEBI" id="CHEBI:17319"/>
        <dbReference type="ChEBI" id="CHEBI:57844"/>
        <dbReference type="ChEBI" id="CHEBI:58354"/>
        <dbReference type="ChEBI" id="CHEBI:59789"/>
        <dbReference type="ChEBI" id="CHEBI:137981"/>
        <dbReference type="EC" id="4.1.99.17"/>
    </reaction>
</comment>
<comment type="cofactor">
    <cofactor evidence="1">
        <name>[4Fe-4S] cluster</name>
        <dbReference type="ChEBI" id="CHEBI:49883"/>
    </cofactor>
    <text evidence="1">Binds 1 [4Fe-4S] cluster per subunit. The cluster is coordinated with 3 cysteines and an exchangeable S-adenosyl-L-methionine.</text>
</comment>
<comment type="pathway">
    <text evidence="1">Cofactor biosynthesis; thiamine diphosphate biosynthesis.</text>
</comment>
<comment type="subunit">
    <text evidence="1">Homodimer.</text>
</comment>
<comment type="similarity">
    <text evidence="1">Belongs to the ThiC family.</text>
</comment>